<proteinExistence type="inferred from homology"/>
<gene>
    <name evidence="1" type="primary">gatA</name>
    <name type="ordered locus">amb1585</name>
</gene>
<protein>
    <recommendedName>
        <fullName evidence="1">Glutamyl-tRNA(Gln) amidotransferase subunit A</fullName>
        <shortName evidence="1">Glu-ADT subunit A</shortName>
        <ecNumber evidence="1">6.3.5.7</ecNumber>
    </recommendedName>
</protein>
<dbReference type="EC" id="6.3.5.7" evidence="1"/>
<dbReference type="EMBL" id="AP007255">
    <property type="protein sequence ID" value="BAE50389.1"/>
    <property type="status" value="ALT_INIT"/>
    <property type="molecule type" value="Genomic_DNA"/>
</dbReference>
<dbReference type="RefSeq" id="WP_043743836.1">
    <property type="nucleotide sequence ID" value="NC_007626.1"/>
</dbReference>
<dbReference type="SMR" id="Q2W6Y6"/>
<dbReference type="STRING" id="342108.amb1585"/>
<dbReference type="KEGG" id="mag:amb1585"/>
<dbReference type="HOGENOM" id="CLU_009600_0_3_5"/>
<dbReference type="OrthoDB" id="9811471at2"/>
<dbReference type="Proteomes" id="UP000007058">
    <property type="component" value="Chromosome"/>
</dbReference>
<dbReference type="GO" id="GO:0030956">
    <property type="term" value="C:glutamyl-tRNA(Gln) amidotransferase complex"/>
    <property type="evidence" value="ECO:0007669"/>
    <property type="project" value="InterPro"/>
</dbReference>
<dbReference type="GO" id="GO:0005524">
    <property type="term" value="F:ATP binding"/>
    <property type="evidence" value="ECO:0007669"/>
    <property type="project" value="UniProtKB-KW"/>
</dbReference>
<dbReference type="GO" id="GO:0050567">
    <property type="term" value="F:glutaminyl-tRNA synthase (glutamine-hydrolyzing) activity"/>
    <property type="evidence" value="ECO:0007669"/>
    <property type="project" value="UniProtKB-UniRule"/>
</dbReference>
<dbReference type="GO" id="GO:0006412">
    <property type="term" value="P:translation"/>
    <property type="evidence" value="ECO:0007669"/>
    <property type="project" value="UniProtKB-UniRule"/>
</dbReference>
<dbReference type="Gene3D" id="3.90.1300.10">
    <property type="entry name" value="Amidase signature (AS) domain"/>
    <property type="match status" value="1"/>
</dbReference>
<dbReference type="HAMAP" id="MF_00120">
    <property type="entry name" value="GatA"/>
    <property type="match status" value="1"/>
</dbReference>
<dbReference type="InterPro" id="IPR000120">
    <property type="entry name" value="Amidase"/>
</dbReference>
<dbReference type="InterPro" id="IPR020556">
    <property type="entry name" value="Amidase_CS"/>
</dbReference>
<dbReference type="InterPro" id="IPR023631">
    <property type="entry name" value="Amidase_dom"/>
</dbReference>
<dbReference type="InterPro" id="IPR036928">
    <property type="entry name" value="AS_sf"/>
</dbReference>
<dbReference type="InterPro" id="IPR004412">
    <property type="entry name" value="GatA"/>
</dbReference>
<dbReference type="NCBIfam" id="TIGR00132">
    <property type="entry name" value="gatA"/>
    <property type="match status" value="1"/>
</dbReference>
<dbReference type="PANTHER" id="PTHR11895:SF151">
    <property type="entry name" value="GLUTAMYL-TRNA(GLN) AMIDOTRANSFERASE SUBUNIT A"/>
    <property type="match status" value="1"/>
</dbReference>
<dbReference type="PANTHER" id="PTHR11895">
    <property type="entry name" value="TRANSAMIDASE"/>
    <property type="match status" value="1"/>
</dbReference>
<dbReference type="Pfam" id="PF01425">
    <property type="entry name" value="Amidase"/>
    <property type="match status" value="1"/>
</dbReference>
<dbReference type="SUPFAM" id="SSF75304">
    <property type="entry name" value="Amidase signature (AS) enzymes"/>
    <property type="match status" value="1"/>
</dbReference>
<dbReference type="PROSITE" id="PS00571">
    <property type="entry name" value="AMIDASES"/>
    <property type="match status" value="1"/>
</dbReference>
<sequence>MSKLTDLTMAEARDGLAKGAFTAVELTDAHIKATEAQRHLNAFIVETPDLALEAAKASDARRQAGTAGSMDGLPIGIKDLFCTEGVQTTAASHILEGFKPPYESTVSGKLKAAGAISLGKLNLDEFAMGSSNQTSYFGAVENPWKKTSDPKAKLVPGGSSGGSAAAVAARMVLGATGTDTGGSIRQPAAFCGITGIKPTYGRCSRFGIVAFASSLDQAGPMARTVRDCAIMLGAMAGHDPKDSTSVNMAVPDFERALTGDIRGLKVGIPKEYRPDGLSDEVAKVWDRGIEWLKAAGATPVEISLPHTKYALATYYIIAPAECSSNLARYDGLRYGLRVPGKTLDDMYKKSRAAGFGAEVRRRILIGTYVLSAGYYDAYYAKAQKVRRLIAEDFRKAFETVDVILTPTAPSAAFGMGEGTDDPVTMWLNDVFTIPTSMAGLPGLSLPAGLSADGLPLGLQLIGRPFDEETVFRVAGVMETAANFTAKPEGV</sequence>
<comment type="function">
    <text evidence="1">Allows the formation of correctly charged Gln-tRNA(Gln) through the transamidation of misacylated Glu-tRNA(Gln) in organisms which lack glutaminyl-tRNA synthetase. The reaction takes place in the presence of glutamine and ATP through an activated gamma-phospho-Glu-tRNA(Gln).</text>
</comment>
<comment type="catalytic activity">
    <reaction evidence="1">
        <text>L-glutamyl-tRNA(Gln) + L-glutamine + ATP + H2O = L-glutaminyl-tRNA(Gln) + L-glutamate + ADP + phosphate + H(+)</text>
        <dbReference type="Rhea" id="RHEA:17521"/>
        <dbReference type="Rhea" id="RHEA-COMP:9681"/>
        <dbReference type="Rhea" id="RHEA-COMP:9684"/>
        <dbReference type="ChEBI" id="CHEBI:15377"/>
        <dbReference type="ChEBI" id="CHEBI:15378"/>
        <dbReference type="ChEBI" id="CHEBI:29985"/>
        <dbReference type="ChEBI" id="CHEBI:30616"/>
        <dbReference type="ChEBI" id="CHEBI:43474"/>
        <dbReference type="ChEBI" id="CHEBI:58359"/>
        <dbReference type="ChEBI" id="CHEBI:78520"/>
        <dbReference type="ChEBI" id="CHEBI:78521"/>
        <dbReference type="ChEBI" id="CHEBI:456216"/>
        <dbReference type="EC" id="6.3.5.7"/>
    </reaction>
</comment>
<comment type="subunit">
    <text evidence="1">Heterotrimer of A, B and C subunits.</text>
</comment>
<comment type="similarity">
    <text evidence="1">Belongs to the amidase family. GatA subfamily.</text>
</comment>
<comment type="sequence caution" evidence="2">
    <conflict type="erroneous initiation">
        <sequence resource="EMBL-CDS" id="BAE50389"/>
    </conflict>
</comment>
<accession>Q2W6Y6</accession>
<keyword id="KW-0067">ATP-binding</keyword>
<keyword id="KW-0436">Ligase</keyword>
<keyword id="KW-0547">Nucleotide-binding</keyword>
<keyword id="KW-0648">Protein biosynthesis</keyword>
<evidence type="ECO:0000255" key="1">
    <source>
        <dbReference type="HAMAP-Rule" id="MF_00120"/>
    </source>
</evidence>
<evidence type="ECO:0000305" key="2"/>
<organism>
    <name type="scientific">Paramagnetospirillum magneticum (strain ATCC 700264 / AMB-1)</name>
    <name type="common">Magnetospirillum magneticum</name>
    <dbReference type="NCBI Taxonomy" id="342108"/>
    <lineage>
        <taxon>Bacteria</taxon>
        <taxon>Pseudomonadati</taxon>
        <taxon>Pseudomonadota</taxon>
        <taxon>Alphaproteobacteria</taxon>
        <taxon>Rhodospirillales</taxon>
        <taxon>Magnetospirillaceae</taxon>
        <taxon>Paramagnetospirillum</taxon>
    </lineage>
</organism>
<feature type="chain" id="PRO_0000241116" description="Glutamyl-tRNA(Gln) amidotransferase subunit A">
    <location>
        <begin position="1"/>
        <end position="490"/>
    </location>
</feature>
<feature type="active site" description="Charge relay system" evidence="1">
    <location>
        <position position="78"/>
    </location>
</feature>
<feature type="active site" description="Charge relay system" evidence="1">
    <location>
        <position position="159"/>
    </location>
</feature>
<feature type="active site" description="Acyl-ester intermediate" evidence="1">
    <location>
        <position position="183"/>
    </location>
</feature>
<reference key="1">
    <citation type="journal article" date="2005" name="DNA Res.">
        <title>Complete genome sequence of the facultative anaerobic magnetotactic bacterium Magnetospirillum sp. strain AMB-1.</title>
        <authorList>
            <person name="Matsunaga T."/>
            <person name="Okamura Y."/>
            <person name="Fukuda Y."/>
            <person name="Wahyudi A.T."/>
            <person name="Murase Y."/>
            <person name="Takeyama H."/>
        </authorList>
    </citation>
    <scope>NUCLEOTIDE SEQUENCE [LARGE SCALE GENOMIC DNA]</scope>
    <source>
        <strain>ATCC 700264 / AMB-1</strain>
    </source>
</reference>
<name>GATA_PARM1</name>